<feature type="chain" id="PRO_0000123729" description="Tritrans,polycis-undecaprenyl-diphosphate synthase (geranylgeranyl-diphosphate specific)">
    <location>
        <begin position="1"/>
        <end position="302"/>
    </location>
</feature>
<feature type="active site" evidence="1">
    <location>
        <position position="33"/>
    </location>
</feature>
<feature type="active site" description="Proton acceptor" evidence="1">
    <location>
        <position position="81"/>
    </location>
</feature>
<feature type="binding site" evidence="1">
    <location>
        <position position="33"/>
    </location>
    <ligand>
        <name>Mg(2+)</name>
        <dbReference type="ChEBI" id="CHEBI:18420"/>
    </ligand>
</feature>
<feature type="binding site" evidence="1">
    <location>
        <begin position="34"/>
        <end position="37"/>
    </location>
    <ligand>
        <name>substrate</name>
    </ligand>
</feature>
<feature type="binding site" evidence="1">
    <location>
        <begin position="78"/>
        <end position="80"/>
    </location>
    <ligand>
        <name>substrate</name>
    </ligand>
</feature>
<feature type="binding site" evidence="1">
    <location>
        <position position="82"/>
    </location>
    <ligand>
        <name>substrate</name>
    </ligand>
</feature>
<feature type="binding site" evidence="1">
    <location>
        <position position="84"/>
    </location>
    <ligand>
        <name>substrate</name>
    </ligand>
</feature>
<feature type="binding site" evidence="1">
    <location>
        <position position="203"/>
    </location>
    <ligand>
        <name>substrate</name>
    </ligand>
</feature>
<feature type="binding site" evidence="1">
    <location>
        <begin position="209"/>
        <end position="211"/>
    </location>
    <ligand>
        <name>substrate</name>
    </ligand>
</feature>
<keyword id="KW-0460">Magnesium</keyword>
<keyword id="KW-0479">Metal-binding</keyword>
<keyword id="KW-1185">Reference proteome</keyword>
<keyword id="KW-0808">Transferase</keyword>
<evidence type="ECO:0000255" key="1">
    <source>
        <dbReference type="HAMAP-Rule" id="MF_01139"/>
    </source>
</evidence>
<reference key="1">
    <citation type="journal article" date="2000" name="Proc. Natl. Acad. Sci. U.S.A.">
        <title>Genome sequence of Halobacterium species NRC-1.</title>
        <authorList>
            <person name="Ng W.V."/>
            <person name="Kennedy S.P."/>
            <person name="Mahairas G.G."/>
            <person name="Berquist B."/>
            <person name="Pan M."/>
            <person name="Shukla H.D."/>
            <person name="Lasky S.R."/>
            <person name="Baliga N.S."/>
            <person name="Thorsson V."/>
            <person name="Sbrogna J."/>
            <person name="Swartzell S."/>
            <person name="Weir D."/>
            <person name="Hall J."/>
            <person name="Dahl T.A."/>
            <person name="Welti R."/>
            <person name="Goo Y.A."/>
            <person name="Leithauser B."/>
            <person name="Keller K."/>
            <person name="Cruz R."/>
            <person name="Danson M.J."/>
            <person name="Hough D.W."/>
            <person name="Maddocks D.G."/>
            <person name="Jablonski P.E."/>
            <person name="Krebs M.P."/>
            <person name="Angevine C.M."/>
            <person name="Dale H."/>
            <person name="Isenbarger T.A."/>
            <person name="Peck R.F."/>
            <person name="Pohlschroder M."/>
            <person name="Spudich J.L."/>
            <person name="Jung K.-H."/>
            <person name="Alam M."/>
            <person name="Freitas T."/>
            <person name="Hou S."/>
            <person name="Daniels C.J."/>
            <person name="Dennis P.P."/>
            <person name="Omer A.D."/>
            <person name="Ebhardt H."/>
            <person name="Lowe T.M."/>
            <person name="Liang P."/>
            <person name="Riley M."/>
            <person name="Hood L."/>
            <person name="DasSarma S."/>
        </authorList>
    </citation>
    <scope>NUCLEOTIDE SEQUENCE [LARGE SCALE GENOMIC DNA]</scope>
    <source>
        <strain>ATCC 700922 / JCM 11081 / NRC-1</strain>
    </source>
</reference>
<gene>
    <name evidence="1" type="primary">uppS</name>
    <name type="ordered locus">VNG_1779C</name>
</gene>
<protein>
    <recommendedName>
        <fullName evidence="1">Tritrans,polycis-undecaprenyl-diphosphate synthase (geranylgeranyl-diphosphate specific)</fullName>
        <ecNumber evidence="1">2.5.1.89</ecNumber>
    </recommendedName>
    <alternativeName>
        <fullName evidence="1">Undecaprenyl diphosphate synthase</fullName>
        <shortName evidence="1">UDS</shortName>
    </alternativeName>
    <alternativeName>
        <fullName evidence="1">Undecaprenyl pyrophosphate synthase</fullName>
        <shortName evidence="1">UPP synthase</shortName>
    </alternativeName>
</protein>
<sequence>MRTRLWDAASAVYERLLTREIDGAPAHVAVIQDGNRRYAREHGDDPTDGYQSGARTTERVLEWCSDLGVEELTLYAFSTENFERPPDQQQHLFDLLESKLREFADADRVHADRVRIRAIGDTGRLPQRVRDAITYAESRTAGYDGFTLNVALAYGGRDELLTAARGVADAVAAGDLDPADIDAQAIESRLHTSPVRDVDLIIRTGGDERTSNFLPWHANGSEAAVFFCTPYWPEFSKVDLLRAIRTYESRAASWRQTRAKRALALVRALGSEVGEARRVLDRFKGALPDPPEDVEAETQSAD</sequence>
<dbReference type="EC" id="2.5.1.89" evidence="1"/>
<dbReference type="EMBL" id="AE004437">
    <property type="protein sequence ID" value="AAG20002.1"/>
    <property type="molecule type" value="Genomic_DNA"/>
</dbReference>
<dbReference type="PIR" id="F84329">
    <property type="entry name" value="F84329"/>
</dbReference>
<dbReference type="RefSeq" id="WP_010903300.1">
    <property type="nucleotide sequence ID" value="NC_002607.1"/>
</dbReference>
<dbReference type="SMR" id="Q9HP68"/>
<dbReference type="FunCoup" id="Q9HP68">
    <property type="interactions" value="148"/>
</dbReference>
<dbReference type="STRING" id="64091.VNG_1779C"/>
<dbReference type="PaxDb" id="64091-VNG_1779C"/>
<dbReference type="GeneID" id="89350010"/>
<dbReference type="KEGG" id="hal:VNG_1779C"/>
<dbReference type="PATRIC" id="fig|64091.14.peg.1357"/>
<dbReference type="HOGENOM" id="CLU_038505_0_6_2"/>
<dbReference type="InParanoid" id="Q9HP68"/>
<dbReference type="OrthoDB" id="8293at2157"/>
<dbReference type="PhylomeDB" id="Q9HP68"/>
<dbReference type="Proteomes" id="UP000000554">
    <property type="component" value="Chromosome"/>
</dbReference>
<dbReference type="GO" id="GO:0000287">
    <property type="term" value="F:magnesium ion binding"/>
    <property type="evidence" value="ECO:0007669"/>
    <property type="project" value="UniProtKB-UniRule"/>
</dbReference>
<dbReference type="GO" id="GO:0004659">
    <property type="term" value="F:prenyltransferase activity"/>
    <property type="evidence" value="ECO:0007669"/>
    <property type="project" value="UniProtKB-UniRule"/>
</dbReference>
<dbReference type="GO" id="GO:0016094">
    <property type="term" value="P:polyprenol biosynthetic process"/>
    <property type="evidence" value="ECO:0000318"/>
    <property type="project" value="GO_Central"/>
</dbReference>
<dbReference type="CDD" id="cd00475">
    <property type="entry name" value="Cis_IPPS"/>
    <property type="match status" value="1"/>
</dbReference>
<dbReference type="FunFam" id="3.40.1180.10:FF:000003">
    <property type="entry name" value="Isoprenyl transferase 2"/>
    <property type="match status" value="1"/>
</dbReference>
<dbReference type="Gene3D" id="3.40.1180.10">
    <property type="entry name" value="Decaprenyl diphosphate synthase-like"/>
    <property type="match status" value="1"/>
</dbReference>
<dbReference type="HAMAP" id="MF_01139">
    <property type="entry name" value="ISPT"/>
    <property type="match status" value="1"/>
</dbReference>
<dbReference type="InterPro" id="IPR001441">
    <property type="entry name" value="UPP_synth-like"/>
</dbReference>
<dbReference type="InterPro" id="IPR018520">
    <property type="entry name" value="UPP_synth-like_CS"/>
</dbReference>
<dbReference type="InterPro" id="IPR036424">
    <property type="entry name" value="UPP_synth-like_sf"/>
</dbReference>
<dbReference type="NCBIfam" id="TIGR00055">
    <property type="entry name" value="uppS"/>
    <property type="match status" value="1"/>
</dbReference>
<dbReference type="PANTHER" id="PTHR10291:SF43">
    <property type="entry name" value="DEHYDRODOLICHYL DIPHOSPHATE SYNTHASE COMPLEX SUBUNIT DHDDS"/>
    <property type="match status" value="1"/>
</dbReference>
<dbReference type="PANTHER" id="PTHR10291">
    <property type="entry name" value="DEHYDRODOLICHYL DIPHOSPHATE SYNTHASE FAMILY MEMBER"/>
    <property type="match status" value="1"/>
</dbReference>
<dbReference type="Pfam" id="PF01255">
    <property type="entry name" value="Prenyltransf"/>
    <property type="match status" value="1"/>
</dbReference>
<dbReference type="SUPFAM" id="SSF64005">
    <property type="entry name" value="Undecaprenyl diphosphate synthase"/>
    <property type="match status" value="1"/>
</dbReference>
<dbReference type="PROSITE" id="PS01066">
    <property type="entry name" value="UPP_SYNTHASE"/>
    <property type="match status" value="1"/>
</dbReference>
<name>UPPS_HALSA</name>
<organism>
    <name type="scientific">Halobacterium salinarum (strain ATCC 700922 / JCM 11081 / NRC-1)</name>
    <name type="common">Halobacterium halobium</name>
    <dbReference type="NCBI Taxonomy" id="64091"/>
    <lineage>
        <taxon>Archaea</taxon>
        <taxon>Methanobacteriati</taxon>
        <taxon>Methanobacteriota</taxon>
        <taxon>Stenosarchaea group</taxon>
        <taxon>Halobacteria</taxon>
        <taxon>Halobacteriales</taxon>
        <taxon>Halobacteriaceae</taxon>
        <taxon>Halobacterium</taxon>
        <taxon>Halobacterium salinarum NRC-34001</taxon>
    </lineage>
</organism>
<accession>Q9HP68</accession>
<comment type="function">
    <text evidence="1">Catalyzes the sequential condensation of isopentenyl diphosphate (IPP) with geranylgeranyl diphosphate (GGPP) to yield (2Z,6Z,10Z,14Z,18Z,22Z,26Z,30E,34E,38E)-undecaprenyl diphosphate (tritrans,heptacis-UPP). It is probably the precursor of glycosyl carrier lipids.</text>
</comment>
<comment type="catalytic activity">
    <reaction evidence="1">
        <text>geranylgeranyl diphosphate + 7 isopentenyl diphosphate = tri-trans,hepta-cis-undecaprenyl diphosphate + 7 diphosphate</text>
        <dbReference type="Rhea" id="RHEA:27622"/>
        <dbReference type="ChEBI" id="CHEBI:33019"/>
        <dbReference type="ChEBI" id="CHEBI:57533"/>
        <dbReference type="ChEBI" id="CHEBI:60388"/>
        <dbReference type="ChEBI" id="CHEBI:128769"/>
        <dbReference type="EC" id="2.5.1.89"/>
    </reaction>
</comment>
<comment type="cofactor">
    <cofactor evidence="1">
        <name>Mg(2+)</name>
        <dbReference type="ChEBI" id="CHEBI:18420"/>
    </cofactor>
    <text evidence="1">Binds 2 magnesium ions per subunit.</text>
</comment>
<comment type="subunit">
    <text evidence="1">Homodimer.</text>
</comment>
<comment type="similarity">
    <text evidence="1">Belongs to the UPP synthase family.</text>
</comment>
<proteinExistence type="inferred from homology"/>